<feature type="chain" id="PRO_0000261984" description="Nucleotide-binding protein Tbd_1846">
    <location>
        <begin position="1"/>
        <end position="161"/>
    </location>
</feature>
<sequence length="161" mass="17947">MPSFDIVSEVDKQEVRNAIDQVNKEVSTRFDFKGSDARVEQSDYALTVYADTDFQLDQVQDILSQKLSKRGVDVKCLDTGNVEKVSGNKVKRSVTVKTGVGTELAKKIVKCIKDSKLKVQASIQGETVRVSGAKRDVLQETIALVKKSVSDFPLQYQNFRD</sequence>
<gene>
    <name type="ordered locus">Tbd_1846</name>
</gene>
<reference key="1">
    <citation type="journal article" date="2006" name="J. Bacteriol.">
        <title>The genome sequence of the obligately chemolithoautotrophic, facultatively anaerobic bacterium Thiobacillus denitrificans.</title>
        <authorList>
            <person name="Beller H.R."/>
            <person name="Chain P.S."/>
            <person name="Letain T.E."/>
            <person name="Chakicherla A."/>
            <person name="Larimer F.W."/>
            <person name="Richardson P.M."/>
            <person name="Coleman M.A."/>
            <person name="Wood A.P."/>
            <person name="Kelly D.P."/>
        </authorList>
    </citation>
    <scope>NUCLEOTIDE SEQUENCE [LARGE SCALE GENOMIC DNA]</scope>
    <source>
        <strain>ATCC 25259 / T1</strain>
    </source>
</reference>
<organism>
    <name type="scientific">Thiobacillus denitrificans (strain ATCC 25259 / T1)</name>
    <dbReference type="NCBI Taxonomy" id="292415"/>
    <lineage>
        <taxon>Bacteria</taxon>
        <taxon>Pseudomonadati</taxon>
        <taxon>Pseudomonadota</taxon>
        <taxon>Betaproteobacteria</taxon>
        <taxon>Nitrosomonadales</taxon>
        <taxon>Thiobacillaceae</taxon>
        <taxon>Thiobacillus</taxon>
    </lineage>
</organism>
<comment type="function">
    <text evidence="1">Nucleotide-binding protein.</text>
</comment>
<comment type="similarity">
    <text evidence="1">Belongs to the YajQ family.</text>
</comment>
<proteinExistence type="inferred from homology"/>
<accession>Q3SHT4</accession>
<protein>
    <recommendedName>
        <fullName evidence="1">Nucleotide-binding protein Tbd_1846</fullName>
    </recommendedName>
</protein>
<dbReference type="EMBL" id="CP000116">
    <property type="protein sequence ID" value="AAZ97799.1"/>
    <property type="molecule type" value="Genomic_DNA"/>
</dbReference>
<dbReference type="RefSeq" id="WP_011312358.1">
    <property type="nucleotide sequence ID" value="NC_007404.1"/>
</dbReference>
<dbReference type="SMR" id="Q3SHT4"/>
<dbReference type="STRING" id="292415.Tbd_1846"/>
<dbReference type="KEGG" id="tbd:Tbd_1846"/>
<dbReference type="eggNOG" id="COG1666">
    <property type="taxonomic scope" value="Bacteria"/>
</dbReference>
<dbReference type="HOGENOM" id="CLU_099839_1_0_4"/>
<dbReference type="OrthoDB" id="9801447at2"/>
<dbReference type="Proteomes" id="UP000008291">
    <property type="component" value="Chromosome"/>
</dbReference>
<dbReference type="GO" id="GO:0005829">
    <property type="term" value="C:cytosol"/>
    <property type="evidence" value="ECO:0007669"/>
    <property type="project" value="TreeGrafter"/>
</dbReference>
<dbReference type="GO" id="GO:0000166">
    <property type="term" value="F:nucleotide binding"/>
    <property type="evidence" value="ECO:0007669"/>
    <property type="project" value="TreeGrafter"/>
</dbReference>
<dbReference type="CDD" id="cd11740">
    <property type="entry name" value="YajQ_like"/>
    <property type="match status" value="1"/>
</dbReference>
<dbReference type="Gene3D" id="3.30.70.860">
    <property type="match status" value="1"/>
</dbReference>
<dbReference type="Gene3D" id="3.30.70.990">
    <property type="entry name" value="YajQ-like, domain 2"/>
    <property type="match status" value="1"/>
</dbReference>
<dbReference type="HAMAP" id="MF_00632">
    <property type="entry name" value="YajQ"/>
    <property type="match status" value="1"/>
</dbReference>
<dbReference type="InterPro" id="IPR007551">
    <property type="entry name" value="DUF520"/>
</dbReference>
<dbReference type="InterPro" id="IPR035571">
    <property type="entry name" value="UPF0234-like_C"/>
</dbReference>
<dbReference type="InterPro" id="IPR035570">
    <property type="entry name" value="UPF0234_N"/>
</dbReference>
<dbReference type="InterPro" id="IPR036183">
    <property type="entry name" value="YajQ-like_sf"/>
</dbReference>
<dbReference type="NCBIfam" id="NF003819">
    <property type="entry name" value="PRK05412.1"/>
    <property type="match status" value="1"/>
</dbReference>
<dbReference type="PANTHER" id="PTHR30476">
    <property type="entry name" value="UPF0234 PROTEIN YAJQ"/>
    <property type="match status" value="1"/>
</dbReference>
<dbReference type="PANTHER" id="PTHR30476:SF0">
    <property type="entry name" value="UPF0234 PROTEIN YAJQ"/>
    <property type="match status" value="1"/>
</dbReference>
<dbReference type="Pfam" id="PF04461">
    <property type="entry name" value="DUF520"/>
    <property type="match status" value="1"/>
</dbReference>
<dbReference type="SUPFAM" id="SSF89963">
    <property type="entry name" value="YajQ-like"/>
    <property type="match status" value="2"/>
</dbReference>
<keyword id="KW-0547">Nucleotide-binding</keyword>
<keyword id="KW-1185">Reference proteome</keyword>
<evidence type="ECO:0000255" key="1">
    <source>
        <dbReference type="HAMAP-Rule" id="MF_00632"/>
    </source>
</evidence>
<name>Y1846_THIDA</name>